<dbReference type="EMBL" id="AE013599">
    <property type="protein sequence ID" value="AAF58753.1"/>
    <property type="molecule type" value="Genomic_DNA"/>
</dbReference>
<dbReference type="EMBL" id="BT023704">
    <property type="protein sequence ID" value="AAY85104.1"/>
    <property type="molecule type" value="mRNA"/>
</dbReference>
<dbReference type="RefSeq" id="NP_610610.1">
    <property type="nucleotide sequence ID" value="NM_136766.2"/>
</dbReference>
<dbReference type="SMR" id="Q9V5P6"/>
<dbReference type="BioGRID" id="61943">
    <property type="interactions" value="4"/>
</dbReference>
<dbReference type="ComplexPortal" id="CPX-2675">
    <property type="entry name" value="Box H/ACA ribonucleoprotein complex"/>
</dbReference>
<dbReference type="FunCoup" id="Q9V5P6">
    <property type="interactions" value="1398"/>
</dbReference>
<dbReference type="IntAct" id="Q9V5P6">
    <property type="interactions" value="52"/>
</dbReference>
<dbReference type="STRING" id="7227.FBpp0087347"/>
<dbReference type="PaxDb" id="7227-FBpp0087347"/>
<dbReference type="DNASU" id="36135"/>
<dbReference type="EnsemblMetazoa" id="FBtr0088252">
    <property type="protein sequence ID" value="FBpp0087347"/>
    <property type="gene ID" value="FBgn0033548"/>
</dbReference>
<dbReference type="GeneID" id="36135"/>
<dbReference type="KEGG" id="dme:Dmel_CG7637"/>
<dbReference type="UCSC" id="CG7637-RA">
    <property type="organism name" value="d. melanogaster"/>
</dbReference>
<dbReference type="AGR" id="FB:FBgn0033548"/>
<dbReference type="CTD" id="55505"/>
<dbReference type="FlyBase" id="FBgn0033548">
    <property type="gene designation" value="Nop10"/>
</dbReference>
<dbReference type="VEuPathDB" id="VectorBase:FBgn0033548"/>
<dbReference type="eggNOG" id="KOG3503">
    <property type="taxonomic scope" value="Eukaryota"/>
</dbReference>
<dbReference type="GeneTree" id="ENSGT00390000012563"/>
<dbReference type="HOGENOM" id="CLU_184680_1_0_1"/>
<dbReference type="InParanoid" id="Q9V5P6"/>
<dbReference type="OMA" id="HRIIIKK"/>
<dbReference type="OrthoDB" id="13807at2759"/>
<dbReference type="PhylomeDB" id="Q9V5P6"/>
<dbReference type="BioGRID-ORCS" id="36135">
    <property type="hits" value="1 hit in 1 CRISPR screen"/>
</dbReference>
<dbReference type="GenomeRNAi" id="36135"/>
<dbReference type="PRO" id="PR:Q9V5P6"/>
<dbReference type="Proteomes" id="UP000000803">
    <property type="component" value="Chromosome 2R"/>
</dbReference>
<dbReference type="Bgee" id="FBgn0033548">
    <property type="expression patterns" value="Expressed in adult enteroendocrine precursor cell in adult midgut (Drosophila) and 102 other cell types or tissues"/>
</dbReference>
<dbReference type="GO" id="GO:0031429">
    <property type="term" value="C:box H/ACA snoRNP complex"/>
    <property type="evidence" value="ECO:0000318"/>
    <property type="project" value="GO_Central"/>
</dbReference>
<dbReference type="GO" id="GO:0030515">
    <property type="term" value="F:snoRNA binding"/>
    <property type="evidence" value="ECO:0007669"/>
    <property type="project" value="InterPro"/>
</dbReference>
<dbReference type="GO" id="GO:0070034">
    <property type="term" value="F:telomerase RNA binding"/>
    <property type="evidence" value="ECO:0000318"/>
    <property type="project" value="GO_Central"/>
</dbReference>
<dbReference type="GO" id="GO:0042254">
    <property type="term" value="P:ribosome biogenesis"/>
    <property type="evidence" value="ECO:0000315"/>
    <property type="project" value="FlyBase"/>
</dbReference>
<dbReference type="GO" id="GO:0031118">
    <property type="term" value="P:rRNA pseudouridine synthesis"/>
    <property type="evidence" value="ECO:0000318"/>
    <property type="project" value="GO_Central"/>
</dbReference>
<dbReference type="GO" id="GO:0000454">
    <property type="term" value="P:snoRNA guided rRNA pseudouridine synthesis"/>
    <property type="evidence" value="ECO:0000315"/>
    <property type="project" value="FlyBase"/>
</dbReference>
<dbReference type="GO" id="GO:0031120">
    <property type="term" value="P:snRNA pseudouridine synthesis"/>
    <property type="evidence" value="ECO:0000318"/>
    <property type="project" value="GO_Central"/>
</dbReference>
<dbReference type="FunFam" id="4.10.80.300:FF:000001">
    <property type="entry name" value="H/ACA ribonucleoprotein complex subunit 3"/>
    <property type="match status" value="1"/>
</dbReference>
<dbReference type="Gene3D" id="4.10.80.300">
    <property type="match status" value="1"/>
</dbReference>
<dbReference type="InterPro" id="IPR007264">
    <property type="entry name" value="H/ACA_rnp_Nop10"/>
</dbReference>
<dbReference type="InterPro" id="IPR036756">
    <property type="entry name" value="H/ACA_rnp_Nop10_sf"/>
</dbReference>
<dbReference type="PANTHER" id="PTHR13305:SF0">
    <property type="entry name" value="H_ACA RIBONUCLEOPROTEIN COMPLEX SUBUNIT 3"/>
    <property type="match status" value="1"/>
</dbReference>
<dbReference type="PANTHER" id="PTHR13305">
    <property type="entry name" value="RIBOSOME BIOGENESIS PROTEIN NOP10"/>
    <property type="match status" value="1"/>
</dbReference>
<dbReference type="Pfam" id="PF04135">
    <property type="entry name" value="Nop10p"/>
    <property type="match status" value="1"/>
</dbReference>
<dbReference type="SUPFAM" id="SSF144210">
    <property type="entry name" value="Nop10-like SnoRNP"/>
    <property type="match status" value="1"/>
</dbReference>
<proteinExistence type="evidence at protein level"/>
<sequence length="64" mass="7634">MYLMYTINENGDRVYTLKKRTEDGRPTLSAHPARFSPEDKYSRQRLTIKKRFGLLLTQKPEPIY</sequence>
<protein>
    <recommendedName>
        <fullName evidence="4">H/ACA ribonucleoprotein complex subunit 3</fullName>
    </recommendedName>
    <alternativeName>
        <fullName>Nucleolar protein 10</fullName>
    </alternativeName>
    <alternativeName>
        <fullName>Nucleolar protein family A member 3</fullName>
    </alternativeName>
    <alternativeName>
        <fullName evidence="6">Ribonucleoprotein Nop10</fullName>
    </alternativeName>
    <alternativeName>
        <fullName>snoRNP protein dNop10</fullName>
    </alternativeName>
</protein>
<gene>
    <name evidence="6" type="primary">Nop10</name>
    <name evidence="6" type="ORF">CG7637</name>
</gene>
<keyword id="KW-0539">Nucleus</keyword>
<keyword id="KW-1185">Reference proteome</keyword>
<keyword id="KW-0687">Ribonucleoprotein</keyword>
<keyword id="KW-0690">Ribosome biogenesis</keyword>
<keyword id="KW-0698">rRNA processing</keyword>
<comment type="function">
    <text evidence="3 4">Component of the box H/ACA small nucleolar ribonucleoprotein (H/ACA snoRNP) complex, which catalyzes pseudouridylation of rRNA (PubMed:37343092). This involves the isomerization of uridine such that the ribose is subsequently attached to C5, instead of the normal N1 (Probable). Pseudouridine ('psi') residues may serve to stabilize the conformation of rRNAs (Probable). Required for ribosome biogenesis (PubMed:37343092). H/ACA snoRNP complex-dependent ribosome biogenesis is important in female germline cell differentiation during oogenesis (PubMed:37343092).</text>
</comment>
<comment type="subunit">
    <text evidence="5">Component of the box H/ACA small nucleolar ribonucleoprotein (H/ACA snoRNP) complex consisting of Nop60B, Gar1, NPH2 and Nop10, and associated with H/ACA-type snoRNAs.</text>
</comment>
<comment type="subcellular location">
    <subcellularLocation>
        <location evidence="1">Nucleus</location>
        <location evidence="1">Nucleolus</location>
    </subcellularLocation>
</comment>
<comment type="induction">
    <text evidence="2">Repressed during starvation.</text>
</comment>
<comment type="disruption phenotype">
    <text evidence="3">RNAi-mediated knockdown in female germline cells results in a cyst differentiation defect that prevents progression from the 8-cell cyst stage and oocyte differentiation.</text>
</comment>
<comment type="similarity">
    <text evidence="4">Belongs to the NOP10 family.</text>
</comment>
<accession>Q9V5P6</accession>
<accession>Q4QPR2</accession>
<name>NOP10_DROME</name>
<reference key="1">
    <citation type="journal article" date="2000" name="Science">
        <title>The genome sequence of Drosophila melanogaster.</title>
        <authorList>
            <person name="Adams M.D."/>
            <person name="Celniker S.E."/>
            <person name="Holt R.A."/>
            <person name="Evans C.A."/>
            <person name="Gocayne J.D."/>
            <person name="Amanatides P.G."/>
            <person name="Scherer S.E."/>
            <person name="Li P.W."/>
            <person name="Hoskins R.A."/>
            <person name="Galle R.F."/>
            <person name="George R.A."/>
            <person name="Lewis S.E."/>
            <person name="Richards S."/>
            <person name="Ashburner M."/>
            <person name="Henderson S.N."/>
            <person name="Sutton G.G."/>
            <person name="Wortman J.R."/>
            <person name="Yandell M.D."/>
            <person name="Zhang Q."/>
            <person name="Chen L.X."/>
            <person name="Brandon R.C."/>
            <person name="Rogers Y.-H.C."/>
            <person name="Blazej R.G."/>
            <person name="Champe M."/>
            <person name="Pfeiffer B.D."/>
            <person name="Wan K.H."/>
            <person name="Doyle C."/>
            <person name="Baxter E.G."/>
            <person name="Helt G."/>
            <person name="Nelson C.R."/>
            <person name="Miklos G.L.G."/>
            <person name="Abril J.F."/>
            <person name="Agbayani A."/>
            <person name="An H.-J."/>
            <person name="Andrews-Pfannkoch C."/>
            <person name="Baldwin D."/>
            <person name="Ballew R.M."/>
            <person name="Basu A."/>
            <person name="Baxendale J."/>
            <person name="Bayraktaroglu L."/>
            <person name="Beasley E.M."/>
            <person name="Beeson K.Y."/>
            <person name="Benos P.V."/>
            <person name="Berman B.P."/>
            <person name="Bhandari D."/>
            <person name="Bolshakov S."/>
            <person name="Borkova D."/>
            <person name="Botchan M.R."/>
            <person name="Bouck J."/>
            <person name="Brokstein P."/>
            <person name="Brottier P."/>
            <person name="Burtis K.C."/>
            <person name="Busam D.A."/>
            <person name="Butler H."/>
            <person name="Cadieu E."/>
            <person name="Center A."/>
            <person name="Chandra I."/>
            <person name="Cherry J.M."/>
            <person name="Cawley S."/>
            <person name="Dahlke C."/>
            <person name="Davenport L.B."/>
            <person name="Davies P."/>
            <person name="de Pablos B."/>
            <person name="Delcher A."/>
            <person name="Deng Z."/>
            <person name="Mays A.D."/>
            <person name="Dew I."/>
            <person name="Dietz S.M."/>
            <person name="Dodson K."/>
            <person name="Doup L.E."/>
            <person name="Downes M."/>
            <person name="Dugan-Rocha S."/>
            <person name="Dunkov B.C."/>
            <person name="Dunn P."/>
            <person name="Durbin K.J."/>
            <person name="Evangelista C.C."/>
            <person name="Ferraz C."/>
            <person name="Ferriera S."/>
            <person name="Fleischmann W."/>
            <person name="Fosler C."/>
            <person name="Gabrielian A.E."/>
            <person name="Garg N.S."/>
            <person name="Gelbart W.M."/>
            <person name="Glasser K."/>
            <person name="Glodek A."/>
            <person name="Gong F."/>
            <person name="Gorrell J.H."/>
            <person name="Gu Z."/>
            <person name="Guan P."/>
            <person name="Harris M."/>
            <person name="Harris N.L."/>
            <person name="Harvey D.A."/>
            <person name="Heiman T.J."/>
            <person name="Hernandez J.R."/>
            <person name="Houck J."/>
            <person name="Hostin D."/>
            <person name="Houston K.A."/>
            <person name="Howland T.J."/>
            <person name="Wei M.-H."/>
            <person name="Ibegwam C."/>
            <person name="Jalali M."/>
            <person name="Kalush F."/>
            <person name="Karpen G.H."/>
            <person name="Ke Z."/>
            <person name="Kennison J.A."/>
            <person name="Ketchum K.A."/>
            <person name="Kimmel B.E."/>
            <person name="Kodira C.D."/>
            <person name="Kraft C.L."/>
            <person name="Kravitz S."/>
            <person name="Kulp D."/>
            <person name="Lai Z."/>
            <person name="Lasko P."/>
            <person name="Lei Y."/>
            <person name="Levitsky A.A."/>
            <person name="Li J.H."/>
            <person name="Li Z."/>
            <person name="Liang Y."/>
            <person name="Lin X."/>
            <person name="Liu X."/>
            <person name="Mattei B."/>
            <person name="McIntosh T.C."/>
            <person name="McLeod M.P."/>
            <person name="McPherson D."/>
            <person name="Merkulov G."/>
            <person name="Milshina N.V."/>
            <person name="Mobarry C."/>
            <person name="Morris J."/>
            <person name="Moshrefi A."/>
            <person name="Mount S.M."/>
            <person name="Moy M."/>
            <person name="Murphy B."/>
            <person name="Murphy L."/>
            <person name="Muzny D.M."/>
            <person name="Nelson D.L."/>
            <person name="Nelson D.R."/>
            <person name="Nelson K.A."/>
            <person name="Nixon K."/>
            <person name="Nusskern D.R."/>
            <person name="Pacleb J.M."/>
            <person name="Palazzolo M."/>
            <person name="Pittman G.S."/>
            <person name="Pan S."/>
            <person name="Pollard J."/>
            <person name="Puri V."/>
            <person name="Reese M.G."/>
            <person name="Reinert K."/>
            <person name="Remington K."/>
            <person name="Saunders R.D.C."/>
            <person name="Scheeler F."/>
            <person name="Shen H."/>
            <person name="Shue B.C."/>
            <person name="Siden-Kiamos I."/>
            <person name="Simpson M."/>
            <person name="Skupski M.P."/>
            <person name="Smith T.J."/>
            <person name="Spier E."/>
            <person name="Spradling A.C."/>
            <person name="Stapleton M."/>
            <person name="Strong R."/>
            <person name="Sun E."/>
            <person name="Svirskas R."/>
            <person name="Tector C."/>
            <person name="Turner R."/>
            <person name="Venter E."/>
            <person name="Wang A.H."/>
            <person name="Wang X."/>
            <person name="Wang Z.-Y."/>
            <person name="Wassarman D.A."/>
            <person name="Weinstock G.M."/>
            <person name="Weissenbach J."/>
            <person name="Williams S.M."/>
            <person name="Woodage T."/>
            <person name="Worley K.C."/>
            <person name="Wu D."/>
            <person name="Yang S."/>
            <person name="Yao Q.A."/>
            <person name="Ye J."/>
            <person name="Yeh R.-F."/>
            <person name="Zaveri J.S."/>
            <person name="Zhan M."/>
            <person name="Zhang G."/>
            <person name="Zhao Q."/>
            <person name="Zheng L."/>
            <person name="Zheng X.H."/>
            <person name="Zhong F.N."/>
            <person name="Zhong W."/>
            <person name="Zhou X."/>
            <person name="Zhu S.C."/>
            <person name="Zhu X."/>
            <person name="Smith H.O."/>
            <person name="Gibbs R.A."/>
            <person name="Myers E.W."/>
            <person name="Rubin G.M."/>
            <person name="Venter J.C."/>
        </authorList>
    </citation>
    <scope>NUCLEOTIDE SEQUENCE [LARGE SCALE GENOMIC DNA]</scope>
    <source>
        <strain>Berkeley</strain>
    </source>
</reference>
<reference key="2">
    <citation type="journal article" date="2002" name="Genome Biol.">
        <title>Annotation of the Drosophila melanogaster euchromatic genome: a systematic review.</title>
        <authorList>
            <person name="Misra S."/>
            <person name="Crosby M.A."/>
            <person name="Mungall C.J."/>
            <person name="Matthews B.B."/>
            <person name="Campbell K.S."/>
            <person name="Hradecky P."/>
            <person name="Huang Y."/>
            <person name="Kaminker J.S."/>
            <person name="Millburn G.H."/>
            <person name="Prochnik S.E."/>
            <person name="Smith C.D."/>
            <person name="Tupy J.L."/>
            <person name="Whitfield E.J."/>
            <person name="Bayraktaroglu L."/>
            <person name="Berman B.P."/>
            <person name="Bettencourt B.R."/>
            <person name="Celniker S.E."/>
            <person name="de Grey A.D.N.J."/>
            <person name="Drysdale R.A."/>
            <person name="Harris N.L."/>
            <person name="Richter J."/>
            <person name="Russo S."/>
            <person name="Schroeder A.J."/>
            <person name="Shu S.Q."/>
            <person name="Stapleton M."/>
            <person name="Yamada C."/>
            <person name="Ashburner M."/>
            <person name="Gelbart W.M."/>
            <person name="Rubin G.M."/>
            <person name="Lewis S.E."/>
        </authorList>
    </citation>
    <scope>GENOME REANNOTATION</scope>
    <source>
        <strain>Berkeley</strain>
    </source>
</reference>
<reference key="3">
    <citation type="submission" date="2005-06" db="EMBL/GenBank/DDBJ databases">
        <authorList>
            <person name="Stapleton M."/>
            <person name="Carlson J.W."/>
            <person name="Chavez C."/>
            <person name="Frise E."/>
            <person name="George R.A."/>
            <person name="Pacleb J.M."/>
            <person name="Park S."/>
            <person name="Wan K.H."/>
            <person name="Yu C."/>
            <person name="Celniker S.E."/>
        </authorList>
    </citation>
    <scope>NUCLEOTIDE SEQUENCE [LARGE SCALE MRNA]</scope>
    <source>
        <strain>Berkeley</strain>
    </source>
</reference>
<reference key="4">
    <citation type="journal article" date="2002" name="EMBO J.">
        <title>Nutrient control of gene expression in Drosophila: microarray analysis of starvation and sugar-dependent response.</title>
        <authorList>
            <person name="Zinke I."/>
            <person name="Schuetz C.S."/>
            <person name="Katzenberger J.D."/>
            <person name="Bauer M."/>
            <person name="Pankratz M.J."/>
        </authorList>
    </citation>
    <scope>INDUCTION</scope>
</reference>
<reference key="5">
    <citation type="journal article" date="2023" name="Sci. Adv.">
        <title>H/ACA snRNP-dependent ribosome biogenesis regulates translation of polyglutamine proteins.</title>
        <authorList>
            <person name="Breznak S.M."/>
            <person name="Peng Y."/>
            <person name="Deng L."/>
            <person name="Kotb N.M."/>
            <person name="Flamholz Z."/>
            <person name="Rapisarda I.T."/>
            <person name="Martin E.T."/>
            <person name="LaBarge K.A."/>
            <person name="Fabris D."/>
            <person name="Gavis E.R."/>
            <person name="Rangan P."/>
        </authorList>
    </citation>
    <scope>FUNCTION</scope>
    <scope>SUBUNIT</scope>
    <scope>DISRUPTION PHENOTYPE</scope>
</reference>
<evidence type="ECO:0000250" key="1"/>
<evidence type="ECO:0000269" key="2">
    <source>
    </source>
</evidence>
<evidence type="ECO:0000269" key="3">
    <source>
    </source>
</evidence>
<evidence type="ECO:0000305" key="4"/>
<evidence type="ECO:0000305" key="5">
    <source>
    </source>
</evidence>
<evidence type="ECO:0000312" key="6">
    <source>
        <dbReference type="FlyBase" id="FBgn0033548"/>
    </source>
</evidence>
<evidence type="ECO:0000312" key="7">
    <source>
        <dbReference type="Proteomes" id="UP000000803"/>
    </source>
</evidence>
<organism evidence="7">
    <name type="scientific">Drosophila melanogaster</name>
    <name type="common">Fruit fly</name>
    <dbReference type="NCBI Taxonomy" id="7227"/>
    <lineage>
        <taxon>Eukaryota</taxon>
        <taxon>Metazoa</taxon>
        <taxon>Ecdysozoa</taxon>
        <taxon>Arthropoda</taxon>
        <taxon>Hexapoda</taxon>
        <taxon>Insecta</taxon>
        <taxon>Pterygota</taxon>
        <taxon>Neoptera</taxon>
        <taxon>Endopterygota</taxon>
        <taxon>Diptera</taxon>
        <taxon>Brachycera</taxon>
        <taxon>Muscomorpha</taxon>
        <taxon>Ephydroidea</taxon>
        <taxon>Drosophilidae</taxon>
        <taxon>Drosophila</taxon>
        <taxon>Sophophora</taxon>
    </lineage>
</organism>
<feature type="chain" id="PRO_0000149005" description="H/ACA ribonucleoprotein complex subunit 3">
    <location>
        <begin position="1"/>
        <end position="64"/>
    </location>
</feature>